<comment type="function">
    <text evidence="2 3">Polyol dehydrogenase that catalyzes the reversible NAD(+)-dependent oxidation of various sugar alcohols. Is active with xylitol, L-iditol and D-sorbitol (D-glucitol) as substrates, leading to the C2-oxidized products D-xylulose, L-sorbose and D-fructose, respectively (By similarity). Is a key enzyme in the polyol pathway that interconverts glucose and fructose via sorbitol, which constitutes an important alternate route for glucose metabolism (By similarity).</text>
</comment>
<comment type="catalytic activity">
    <reaction evidence="2">
        <text>xylitol + NAD(+) = D-xylulose + NADH + H(+)</text>
        <dbReference type="Rhea" id="RHEA:20433"/>
        <dbReference type="ChEBI" id="CHEBI:15378"/>
        <dbReference type="ChEBI" id="CHEBI:17140"/>
        <dbReference type="ChEBI" id="CHEBI:17151"/>
        <dbReference type="ChEBI" id="CHEBI:57540"/>
        <dbReference type="ChEBI" id="CHEBI:57945"/>
        <dbReference type="EC" id="1.1.1.9"/>
    </reaction>
</comment>
<comment type="catalytic activity">
    <reaction evidence="2">
        <text>L-iditol + NAD(+) = keto-L-sorbose + NADH + H(+)</text>
        <dbReference type="Rhea" id="RHEA:10160"/>
        <dbReference type="ChEBI" id="CHEBI:13172"/>
        <dbReference type="ChEBI" id="CHEBI:15378"/>
        <dbReference type="ChEBI" id="CHEBI:18202"/>
        <dbReference type="ChEBI" id="CHEBI:57540"/>
        <dbReference type="ChEBI" id="CHEBI:57945"/>
        <dbReference type="EC" id="1.1.1.14"/>
    </reaction>
</comment>
<comment type="catalytic activity">
    <reaction evidence="2">
        <text>keto-D-fructose + NADH + H(+) = D-sorbitol + NAD(+)</text>
        <dbReference type="Rhea" id="RHEA:33031"/>
        <dbReference type="ChEBI" id="CHEBI:15378"/>
        <dbReference type="ChEBI" id="CHEBI:17924"/>
        <dbReference type="ChEBI" id="CHEBI:48095"/>
        <dbReference type="ChEBI" id="CHEBI:57540"/>
        <dbReference type="ChEBI" id="CHEBI:57945"/>
    </reaction>
</comment>
<comment type="cofactor">
    <cofactor evidence="1">
        <name>Zn(2+)</name>
        <dbReference type="ChEBI" id="CHEBI:29105"/>
    </cofactor>
    <text evidence="1">Binds 1 zinc ion per subunit.</text>
</comment>
<comment type="subunit">
    <text evidence="1">Homotetramer.</text>
</comment>
<comment type="induction">
    <text>By cold.</text>
</comment>
<comment type="similarity">
    <text evidence="4">Belongs to the zinc-containing alcohol dehydrogenase family.</text>
</comment>
<dbReference type="EC" id="1.1.1.-" evidence="2"/>
<dbReference type="EC" id="1.1.1.14" evidence="2"/>
<dbReference type="EC" id="1.1.1.9" evidence="2"/>
<dbReference type="EMBL" id="D13371">
    <property type="protein sequence ID" value="BAA02634.1"/>
    <property type="molecule type" value="mRNA"/>
</dbReference>
<dbReference type="EMBL" id="D66906">
    <property type="protein sequence ID" value="BAA11030.1"/>
    <property type="molecule type" value="Genomic_DNA"/>
</dbReference>
<dbReference type="PIR" id="S32484">
    <property type="entry name" value="S32484"/>
</dbReference>
<dbReference type="RefSeq" id="NP_001037311.1">
    <property type="nucleotide sequence ID" value="NM_001043846.1"/>
</dbReference>
<dbReference type="SMR" id="Q02912"/>
<dbReference type="STRING" id="7091.Q02912"/>
<dbReference type="GeneID" id="101738079"/>
<dbReference type="InParanoid" id="Q02912"/>
<dbReference type="Proteomes" id="UP000005204">
    <property type="component" value="Unassembled WGS sequence"/>
</dbReference>
<dbReference type="GO" id="GO:0046526">
    <property type="term" value="F:D-xylulose reductase activity"/>
    <property type="evidence" value="ECO:0007669"/>
    <property type="project" value="UniProtKB-EC"/>
</dbReference>
<dbReference type="GO" id="GO:0003939">
    <property type="term" value="F:L-iditol 2-dehydrogenase (NAD+) activity"/>
    <property type="evidence" value="ECO:0007669"/>
    <property type="project" value="UniProtKB-EC"/>
</dbReference>
<dbReference type="GO" id="GO:0008270">
    <property type="term" value="F:zinc ion binding"/>
    <property type="evidence" value="ECO:0007669"/>
    <property type="project" value="InterPro"/>
</dbReference>
<dbReference type="GO" id="GO:0006062">
    <property type="term" value="P:sorbitol catabolic process"/>
    <property type="evidence" value="ECO:0007669"/>
    <property type="project" value="TreeGrafter"/>
</dbReference>
<dbReference type="CDD" id="cd05285">
    <property type="entry name" value="sorbitol_DH"/>
    <property type="match status" value="1"/>
</dbReference>
<dbReference type="FunFam" id="3.40.50.720:FF:000068">
    <property type="entry name" value="Sorbitol dehydrogenase"/>
    <property type="match status" value="1"/>
</dbReference>
<dbReference type="Gene3D" id="3.90.180.10">
    <property type="entry name" value="Medium-chain alcohol dehydrogenases, catalytic domain"/>
    <property type="match status" value="1"/>
</dbReference>
<dbReference type="Gene3D" id="3.40.50.720">
    <property type="entry name" value="NAD(P)-binding Rossmann-like Domain"/>
    <property type="match status" value="1"/>
</dbReference>
<dbReference type="InterPro" id="IPR013149">
    <property type="entry name" value="ADH-like_C"/>
</dbReference>
<dbReference type="InterPro" id="IPR013154">
    <property type="entry name" value="ADH-like_N"/>
</dbReference>
<dbReference type="InterPro" id="IPR002328">
    <property type="entry name" value="ADH_Zn_CS"/>
</dbReference>
<dbReference type="InterPro" id="IPR011032">
    <property type="entry name" value="GroES-like_sf"/>
</dbReference>
<dbReference type="InterPro" id="IPR036291">
    <property type="entry name" value="NAD(P)-bd_dom_sf"/>
</dbReference>
<dbReference type="InterPro" id="IPR020843">
    <property type="entry name" value="PKS_ER"/>
</dbReference>
<dbReference type="InterPro" id="IPR045306">
    <property type="entry name" value="SDH-like"/>
</dbReference>
<dbReference type="PANTHER" id="PTHR43161">
    <property type="entry name" value="SORBITOL DEHYDROGENASE"/>
    <property type="match status" value="1"/>
</dbReference>
<dbReference type="PANTHER" id="PTHR43161:SF9">
    <property type="entry name" value="SORBITOL DEHYDROGENASE"/>
    <property type="match status" value="1"/>
</dbReference>
<dbReference type="Pfam" id="PF08240">
    <property type="entry name" value="ADH_N"/>
    <property type="match status" value="1"/>
</dbReference>
<dbReference type="Pfam" id="PF00107">
    <property type="entry name" value="ADH_zinc_N"/>
    <property type="match status" value="1"/>
</dbReference>
<dbReference type="SMART" id="SM00829">
    <property type="entry name" value="PKS_ER"/>
    <property type="match status" value="1"/>
</dbReference>
<dbReference type="SUPFAM" id="SSF50129">
    <property type="entry name" value="GroES-like"/>
    <property type="match status" value="1"/>
</dbReference>
<dbReference type="SUPFAM" id="SSF51735">
    <property type="entry name" value="NAD(P)-binding Rossmann-fold domains"/>
    <property type="match status" value="1"/>
</dbReference>
<dbReference type="PROSITE" id="PS00059">
    <property type="entry name" value="ADH_ZINC"/>
    <property type="match status" value="1"/>
</dbReference>
<gene>
    <name type="primary">SDH</name>
</gene>
<feature type="chain" id="PRO_0000160820" description="Sorbitol dehydrogenase">
    <location>
        <begin position="1"/>
        <end position="348"/>
    </location>
</feature>
<feature type="binding site" evidence="3">
    <location>
        <position position="40"/>
    </location>
    <ligand>
        <name>Zn(2+)</name>
        <dbReference type="ChEBI" id="CHEBI:29105"/>
        <note>catalytic</note>
    </ligand>
</feature>
<feature type="binding site" evidence="3">
    <location>
        <position position="65"/>
    </location>
    <ligand>
        <name>Zn(2+)</name>
        <dbReference type="ChEBI" id="CHEBI:29105"/>
        <note>catalytic</note>
    </ligand>
</feature>
<feature type="binding site" evidence="3">
    <location>
        <position position="66"/>
    </location>
    <ligand>
        <name>Zn(2+)</name>
        <dbReference type="ChEBI" id="CHEBI:29105"/>
        <note>catalytic</note>
    </ligand>
</feature>
<feature type="binding site" evidence="3">
    <location>
        <position position="179"/>
    </location>
    <ligand>
        <name>NAD(+)</name>
        <dbReference type="ChEBI" id="CHEBI:57540"/>
    </ligand>
</feature>
<feature type="binding site" evidence="3">
    <location>
        <position position="199"/>
    </location>
    <ligand>
        <name>NAD(+)</name>
        <dbReference type="ChEBI" id="CHEBI:57540"/>
    </ligand>
</feature>
<feature type="binding site" evidence="3">
    <location>
        <position position="204"/>
    </location>
    <ligand>
        <name>NAD(+)</name>
        <dbReference type="ChEBI" id="CHEBI:57540"/>
    </ligand>
</feature>
<feature type="binding site" evidence="3">
    <location>
        <begin position="269"/>
        <end position="271"/>
    </location>
    <ligand>
        <name>NAD(+)</name>
        <dbReference type="ChEBI" id="CHEBI:57540"/>
    </ligand>
</feature>
<feature type="binding site" evidence="3">
    <location>
        <begin position="293"/>
        <end position="295"/>
    </location>
    <ligand>
        <name>NAD(+)</name>
        <dbReference type="ChEBI" id="CHEBI:57540"/>
    </ligand>
</feature>
<feature type="binding site" evidence="2">
    <location>
        <position position="295"/>
    </location>
    <ligand>
        <name>substrate</name>
    </ligand>
</feature>
<protein>
    <recommendedName>
        <fullName>Sorbitol dehydrogenase</fullName>
        <shortName>SDH</shortName>
        <ecNumber evidence="2">1.1.1.-</ecNumber>
    </recommendedName>
    <alternativeName>
        <fullName>L-iditol 2-dehydrogenase</fullName>
        <ecNumber evidence="2">1.1.1.14</ecNumber>
    </alternativeName>
    <alternativeName>
        <fullName evidence="4">Polyol dehydrogenase</fullName>
    </alternativeName>
    <alternativeName>
        <fullName>Xylitol dehydrogenase</fullName>
        <shortName>XDH</shortName>
        <ecNumber evidence="2">1.1.1.9</ecNumber>
    </alternativeName>
</protein>
<organism>
    <name type="scientific">Bombyx mori</name>
    <name type="common">Silk moth</name>
    <dbReference type="NCBI Taxonomy" id="7091"/>
    <lineage>
        <taxon>Eukaryota</taxon>
        <taxon>Metazoa</taxon>
        <taxon>Ecdysozoa</taxon>
        <taxon>Arthropoda</taxon>
        <taxon>Hexapoda</taxon>
        <taxon>Insecta</taxon>
        <taxon>Pterygota</taxon>
        <taxon>Neoptera</taxon>
        <taxon>Endopterygota</taxon>
        <taxon>Lepidoptera</taxon>
        <taxon>Glossata</taxon>
        <taxon>Ditrysia</taxon>
        <taxon>Bombycoidea</taxon>
        <taxon>Bombycidae</taxon>
        <taxon>Bombycinae</taxon>
        <taxon>Bombyx</taxon>
    </lineage>
</organism>
<name>DHSO_BOMMO</name>
<accession>Q02912</accession>
<sequence length="348" mass="37158">MTENYAAVLHGANDVRIEKIPVPEINDDEVLIKIDCVGICGSDVKLYSTGTCGADVIDKPIVIGHEGAGTVVKVGDKVSSLRVGDRVAIEPTQPCRSCELCKRGKYNLCVEPRYCSSMGAPGNLCRYYKHVADFCHKLPDNLTMEEGAAVQPLAIVIHACNRAKITLGSKIVILGAGPIGILCAMSAKAMGASKIILTDVVQSRLDAALELGADNVLLVRREYTDEEVVEKIVKLLGDRPDVSIDACGYGSAQRVALLVTKTAGLVLVVGIADKTVELPLSQALLREVDVVGSFRIMNTYQPALAAVSSGAIPLDKFITHRFPLNKTKEALDLAKSGAAMKILIHVQN</sequence>
<reference key="1">
    <citation type="journal article" date="1993" name="Eur. J. Biochem.">
        <title>A cold-inducible Bombyx gene encoding a protein similar to mammalian sorbitol dehydrogenase. Yolk nuclei-dependent gene expression in diapause eggs.</title>
        <authorList>
            <person name="Niimi T."/>
            <person name="Yamashita O."/>
            <person name="Yaginuma T."/>
        </authorList>
    </citation>
    <scope>NUCLEOTIDE SEQUENCE [MRNA]</scope>
</reference>
<reference key="2">
    <citation type="journal article" date="1996" name="Insect Mol. Biol.">
        <title>Structure of the Bombyx sorbitol dehydrogenase gene: a possible alternative use of the promoter.</title>
        <authorList>
            <person name="Niimi T."/>
            <person name="Yamashita O."/>
            <person name="Yaginuma T."/>
        </authorList>
    </citation>
    <scope>NUCLEOTIDE SEQUENCE [GENOMIC DNA]</scope>
    <source>
        <strain>Tokai X Asahi</strain>
        <tissue>Fat body</tissue>
    </source>
</reference>
<keyword id="KW-0479">Metal-binding</keyword>
<keyword id="KW-0520">NAD</keyword>
<keyword id="KW-0560">Oxidoreductase</keyword>
<keyword id="KW-1185">Reference proteome</keyword>
<keyword id="KW-0346">Stress response</keyword>
<keyword id="KW-0862">Zinc</keyword>
<proteinExistence type="evidence at transcript level"/>
<evidence type="ECO:0000250" key="1"/>
<evidence type="ECO:0000250" key="2">
    <source>
        <dbReference type="UniProtKB" id="P07846"/>
    </source>
</evidence>
<evidence type="ECO:0000250" key="3">
    <source>
        <dbReference type="UniProtKB" id="Q00796"/>
    </source>
</evidence>
<evidence type="ECO:0000305" key="4"/>